<feature type="chain" id="PRO_1000137557" description="Protein GrpE">
    <location>
        <begin position="1"/>
        <end position="190"/>
    </location>
</feature>
<feature type="region of interest" description="Disordered" evidence="2">
    <location>
        <begin position="1"/>
        <end position="21"/>
    </location>
</feature>
<feature type="compositionally biased region" description="Polar residues" evidence="2">
    <location>
        <begin position="1"/>
        <end position="18"/>
    </location>
</feature>
<protein>
    <recommendedName>
        <fullName evidence="1">Protein GrpE</fullName>
    </recommendedName>
    <alternativeName>
        <fullName evidence="1">HSP-70 cofactor</fullName>
    </alternativeName>
</protein>
<gene>
    <name evidence="1" type="primary">grpE</name>
    <name type="ordered locus">CTLon_0648</name>
</gene>
<name>GRPE_CHLTB</name>
<comment type="function">
    <text evidence="1">Participates actively in the response to hyperosmotic and heat shock by preventing the aggregation of stress-denatured proteins, in association with DnaK and GrpE. It is the nucleotide exchange factor for DnaK and may function as a thermosensor. Unfolded proteins bind initially to DnaJ; upon interaction with the DnaJ-bound protein, DnaK hydrolyzes its bound ATP, resulting in the formation of a stable complex. GrpE releases ADP from DnaK; ATP binding to DnaK triggers the release of the substrate protein, thus completing the reaction cycle. Several rounds of ATP-dependent interactions between DnaJ, DnaK and GrpE are required for fully efficient folding.</text>
</comment>
<comment type="subunit">
    <text evidence="1">Homodimer.</text>
</comment>
<comment type="subcellular location">
    <subcellularLocation>
        <location evidence="1">Cytoplasm</location>
    </subcellularLocation>
</comment>
<comment type="similarity">
    <text evidence="1">Belongs to the GrpE family.</text>
</comment>
<proteinExistence type="inferred from homology"/>
<keyword id="KW-0143">Chaperone</keyword>
<keyword id="KW-0963">Cytoplasm</keyword>
<keyword id="KW-0346">Stress response</keyword>
<evidence type="ECO:0000255" key="1">
    <source>
        <dbReference type="HAMAP-Rule" id="MF_01151"/>
    </source>
</evidence>
<evidence type="ECO:0000256" key="2">
    <source>
        <dbReference type="SAM" id="MobiDB-lite"/>
    </source>
</evidence>
<accession>B0BC30</accession>
<sequence>MTETPNTSSEEIQTSEPSPDNELQVLQQENANLKAELQEQNDRYLMALAEAENSRKRLRKERTEMMQYAVENALMDFLPPIESMEKALGFASQTSEEVKNWAIGFQMILQQFKQIFEEKGVVEYSSKGELFNPYLHEAVEIEETTTIPEGTILEEFTKGYKIGDRPIRVAKVKVAKLPAKGNSDSNEEKE</sequence>
<reference key="1">
    <citation type="journal article" date="2008" name="Genome Res.">
        <title>Chlamydia trachomatis: genome sequence analysis of lymphogranuloma venereum isolates.</title>
        <authorList>
            <person name="Thomson N.R."/>
            <person name="Holden M.T.G."/>
            <person name="Carder C."/>
            <person name="Lennard N."/>
            <person name="Lockey S.J."/>
            <person name="Marsh P."/>
            <person name="Skipp P."/>
            <person name="O'Connor C.D."/>
            <person name="Goodhead I."/>
            <person name="Norbertzcak H."/>
            <person name="Harris B."/>
            <person name="Ormond D."/>
            <person name="Rance R."/>
            <person name="Quail M.A."/>
            <person name="Parkhill J."/>
            <person name="Stephens R.S."/>
            <person name="Clarke I.N."/>
        </authorList>
    </citation>
    <scope>NUCLEOTIDE SEQUENCE [LARGE SCALE GENOMIC DNA]</scope>
    <source>
        <strain>UCH-1/proctitis</strain>
    </source>
</reference>
<organism>
    <name type="scientific">Chlamydia trachomatis serovar L2b (strain UCH-1/proctitis)</name>
    <dbReference type="NCBI Taxonomy" id="471473"/>
    <lineage>
        <taxon>Bacteria</taxon>
        <taxon>Pseudomonadati</taxon>
        <taxon>Chlamydiota</taxon>
        <taxon>Chlamydiia</taxon>
        <taxon>Chlamydiales</taxon>
        <taxon>Chlamydiaceae</taxon>
        <taxon>Chlamydia/Chlamydophila group</taxon>
        <taxon>Chlamydia</taxon>
    </lineage>
</organism>
<dbReference type="EMBL" id="AM884177">
    <property type="protein sequence ID" value="CAP07045.1"/>
    <property type="molecule type" value="Genomic_DNA"/>
</dbReference>
<dbReference type="RefSeq" id="WP_012263648.1">
    <property type="nucleotide sequence ID" value="NC_010280.2"/>
</dbReference>
<dbReference type="SMR" id="B0BC30"/>
<dbReference type="KEGG" id="ctl:CTLon_0648"/>
<dbReference type="HOGENOM" id="CLU_057217_5_2_0"/>
<dbReference type="Proteomes" id="UP001154401">
    <property type="component" value="Chromosome"/>
</dbReference>
<dbReference type="GO" id="GO:0005737">
    <property type="term" value="C:cytoplasm"/>
    <property type="evidence" value="ECO:0007669"/>
    <property type="project" value="UniProtKB-SubCell"/>
</dbReference>
<dbReference type="GO" id="GO:0000774">
    <property type="term" value="F:adenyl-nucleotide exchange factor activity"/>
    <property type="evidence" value="ECO:0007669"/>
    <property type="project" value="InterPro"/>
</dbReference>
<dbReference type="GO" id="GO:0042803">
    <property type="term" value="F:protein homodimerization activity"/>
    <property type="evidence" value="ECO:0007669"/>
    <property type="project" value="InterPro"/>
</dbReference>
<dbReference type="GO" id="GO:0051087">
    <property type="term" value="F:protein-folding chaperone binding"/>
    <property type="evidence" value="ECO:0007669"/>
    <property type="project" value="InterPro"/>
</dbReference>
<dbReference type="GO" id="GO:0051082">
    <property type="term" value="F:unfolded protein binding"/>
    <property type="evidence" value="ECO:0007669"/>
    <property type="project" value="TreeGrafter"/>
</dbReference>
<dbReference type="GO" id="GO:0006457">
    <property type="term" value="P:protein folding"/>
    <property type="evidence" value="ECO:0007669"/>
    <property type="project" value="InterPro"/>
</dbReference>
<dbReference type="CDD" id="cd00446">
    <property type="entry name" value="GrpE"/>
    <property type="match status" value="1"/>
</dbReference>
<dbReference type="FunFam" id="2.30.22.10:FF:000001">
    <property type="entry name" value="Protein GrpE"/>
    <property type="match status" value="1"/>
</dbReference>
<dbReference type="FunFam" id="3.90.20.20:FF:000020">
    <property type="entry name" value="Protein GrpE"/>
    <property type="match status" value="1"/>
</dbReference>
<dbReference type="Gene3D" id="3.90.20.20">
    <property type="match status" value="1"/>
</dbReference>
<dbReference type="Gene3D" id="2.30.22.10">
    <property type="entry name" value="Head domain of nucleotide exchange factor GrpE"/>
    <property type="match status" value="1"/>
</dbReference>
<dbReference type="HAMAP" id="MF_01151">
    <property type="entry name" value="GrpE"/>
    <property type="match status" value="1"/>
</dbReference>
<dbReference type="InterPro" id="IPR000740">
    <property type="entry name" value="GrpE"/>
</dbReference>
<dbReference type="InterPro" id="IPR013805">
    <property type="entry name" value="GrpE_coiled_coil"/>
</dbReference>
<dbReference type="InterPro" id="IPR009012">
    <property type="entry name" value="GrpE_head"/>
</dbReference>
<dbReference type="PANTHER" id="PTHR21237">
    <property type="entry name" value="GRPE PROTEIN"/>
    <property type="match status" value="1"/>
</dbReference>
<dbReference type="PANTHER" id="PTHR21237:SF23">
    <property type="entry name" value="GRPE PROTEIN HOMOLOG, MITOCHONDRIAL"/>
    <property type="match status" value="1"/>
</dbReference>
<dbReference type="Pfam" id="PF01025">
    <property type="entry name" value="GrpE"/>
    <property type="match status" value="1"/>
</dbReference>
<dbReference type="PRINTS" id="PR00773">
    <property type="entry name" value="GRPEPROTEIN"/>
</dbReference>
<dbReference type="SUPFAM" id="SSF58014">
    <property type="entry name" value="Coiled-coil domain of nucleotide exchange factor GrpE"/>
    <property type="match status" value="1"/>
</dbReference>
<dbReference type="SUPFAM" id="SSF51064">
    <property type="entry name" value="Head domain of nucleotide exchange factor GrpE"/>
    <property type="match status" value="1"/>
</dbReference>
<dbReference type="PROSITE" id="PS01071">
    <property type="entry name" value="GRPE"/>
    <property type="match status" value="1"/>
</dbReference>